<comment type="function">
    <text evidence="1">Binds to the 23S rRNA.</text>
</comment>
<comment type="subunit">
    <text evidence="1">Part of the 50S ribosomal subunit.</text>
</comment>
<comment type="similarity">
    <text evidence="1">Belongs to the universal ribosomal protein uL15 family.</text>
</comment>
<name>RL15_VIBVY</name>
<accession>Q7MPG9</accession>
<dbReference type="EMBL" id="BA000037">
    <property type="protein sequence ID" value="BAC93158.1"/>
    <property type="molecule type" value="Genomic_DNA"/>
</dbReference>
<dbReference type="RefSeq" id="WP_011078814.1">
    <property type="nucleotide sequence ID" value="NC_005139.1"/>
</dbReference>
<dbReference type="SMR" id="Q7MPG9"/>
<dbReference type="STRING" id="672.VV93_v1c03650"/>
<dbReference type="GeneID" id="93895047"/>
<dbReference type="KEGG" id="vvy:VV0394"/>
<dbReference type="eggNOG" id="COG0200">
    <property type="taxonomic scope" value="Bacteria"/>
</dbReference>
<dbReference type="HOGENOM" id="CLU_055188_4_2_6"/>
<dbReference type="Proteomes" id="UP000002675">
    <property type="component" value="Chromosome I"/>
</dbReference>
<dbReference type="GO" id="GO:0022625">
    <property type="term" value="C:cytosolic large ribosomal subunit"/>
    <property type="evidence" value="ECO:0007669"/>
    <property type="project" value="TreeGrafter"/>
</dbReference>
<dbReference type="GO" id="GO:0019843">
    <property type="term" value="F:rRNA binding"/>
    <property type="evidence" value="ECO:0007669"/>
    <property type="project" value="UniProtKB-UniRule"/>
</dbReference>
<dbReference type="GO" id="GO:0003735">
    <property type="term" value="F:structural constituent of ribosome"/>
    <property type="evidence" value="ECO:0007669"/>
    <property type="project" value="InterPro"/>
</dbReference>
<dbReference type="GO" id="GO:0006412">
    <property type="term" value="P:translation"/>
    <property type="evidence" value="ECO:0007669"/>
    <property type="project" value="UniProtKB-UniRule"/>
</dbReference>
<dbReference type="FunFam" id="3.100.10.10:FF:000003">
    <property type="entry name" value="50S ribosomal protein L15"/>
    <property type="match status" value="1"/>
</dbReference>
<dbReference type="Gene3D" id="3.100.10.10">
    <property type="match status" value="1"/>
</dbReference>
<dbReference type="HAMAP" id="MF_01341">
    <property type="entry name" value="Ribosomal_uL15"/>
    <property type="match status" value="1"/>
</dbReference>
<dbReference type="InterPro" id="IPR030878">
    <property type="entry name" value="Ribosomal_uL15"/>
</dbReference>
<dbReference type="InterPro" id="IPR021131">
    <property type="entry name" value="Ribosomal_uL15/eL18"/>
</dbReference>
<dbReference type="InterPro" id="IPR036227">
    <property type="entry name" value="Ribosomal_uL15/eL18_sf"/>
</dbReference>
<dbReference type="InterPro" id="IPR005749">
    <property type="entry name" value="Ribosomal_uL15_bac-type"/>
</dbReference>
<dbReference type="InterPro" id="IPR001196">
    <property type="entry name" value="Ribosomal_uL15_CS"/>
</dbReference>
<dbReference type="NCBIfam" id="TIGR01071">
    <property type="entry name" value="rplO_bact"/>
    <property type="match status" value="1"/>
</dbReference>
<dbReference type="PANTHER" id="PTHR12934">
    <property type="entry name" value="50S RIBOSOMAL PROTEIN L15"/>
    <property type="match status" value="1"/>
</dbReference>
<dbReference type="PANTHER" id="PTHR12934:SF11">
    <property type="entry name" value="LARGE RIBOSOMAL SUBUNIT PROTEIN UL15M"/>
    <property type="match status" value="1"/>
</dbReference>
<dbReference type="Pfam" id="PF00828">
    <property type="entry name" value="Ribosomal_L27A"/>
    <property type="match status" value="1"/>
</dbReference>
<dbReference type="SUPFAM" id="SSF52080">
    <property type="entry name" value="Ribosomal proteins L15p and L18e"/>
    <property type="match status" value="1"/>
</dbReference>
<dbReference type="PROSITE" id="PS00475">
    <property type="entry name" value="RIBOSOMAL_L15"/>
    <property type="match status" value="1"/>
</dbReference>
<protein>
    <recommendedName>
        <fullName evidence="1">Large ribosomal subunit protein uL15</fullName>
    </recommendedName>
    <alternativeName>
        <fullName evidence="3">50S ribosomal protein L15</fullName>
    </alternativeName>
</protein>
<feature type="chain" id="PRO_0000104852" description="Large ribosomal subunit protein uL15">
    <location>
        <begin position="1"/>
        <end position="144"/>
    </location>
</feature>
<feature type="region of interest" description="Disordered" evidence="2">
    <location>
        <begin position="1"/>
        <end position="57"/>
    </location>
</feature>
<feature type="compositionally biased region" description="Gly residues" evidence="2">
    <location>
        <begin position="21"/>
        <end position="31"/>
    </location>
</feature>
<feature type="compositionally biased region" description="Basic residues" evidence="2">
    <location>
        <begin position="32"/>
        <end position="44"/>
    </location>
</feature>
<evidence type="ECO:0000255" key="1">
    <source>
        <dbReference type="HAMAP-Rule" id="MF_01341"/>
    </source>
</evidence>
<evidence type="ECO:0000256" key="2">
    <source>
        <dbReference type="SAM" id="MobiDB-lite"/>
    </source>
</evidence>
<evidence type="ECO:0000305" key="3"/>
<organism>
    <name type="scientific">Vibrio vulnificus (strain YJ016)</name>
    <dbReference type="NCBI Taxonomy" id="196600"/>
    <lineage>
        <taxon>Bacteria</taxon>
        <taxon>Pseudomonadati</taxon>
        <taxon>Pseudomonadota</taxon>
        <taxon>Gammaproteobacteria</taxon>
        <taxon>Vibrionales</taxon>
        <taxon>Vibrionaceae</taxon>
        <taxon>Vibrio</taxon>
    </lineage>
</organism>
<gene>
    <name evidence="1" type="primary">rplO</name>
    <name type="ordered locus">VV0394</name>
</gene>
<proteinExistence type="inferred from homology"/>
<keyword id="KW-0687">Ribonucleoprotein</keyword>
<keyword id="KW-0689">Ribosomal protein</keyword>
<keyword id="KW-0694">RNA-binding</keyword>
<keyword id="KW-0699">rRNA-binding</keyword>
<sequence length="144" mass="14936">MRLNTLSPAAGSKHAPKRVGRGIGSGLGKTGGRGHKGQKSRSGGKVRPGFEGGQMPLKQRLPKFGFTSRKSLVSAEVRVAELAKVTGDVVDLNSLKAANVITKNIENVKIVLSGEINKAVTVKGLRVTKGAKAAIEAAGGKIEE</sequence>
<reference key="1">
    <citation type="journal article" date="2003" name="Genome Res.">
        <title>Comparative genome analysis of Vibrio vulnificus, a marine pathogen.</title>
        <authorList>
            <person name="Chen C.-Y."/>
            <person name="Wu K.-M."/>
            <person name="Chang Y.-C."/>
            <person name="Chang C.-H."/>
            <person name="Tsai H.-C."/>
            <person name="Liao T.-L."/>
            <person name="Liu Y.-M."/>
            <person name="Chen H.-J."/>
            <person name="Shen A.B.-T."/>
            <person name="Li J.-C."/>
            <person name="Su T.-L."/>
            <person name="Shao C.-P."/>
            <person name="Lee C.-T."/>
            <person name="Hor L.-I."/>
            <person name="Tsai S.-F."/>
        </authorList>
    </citation>
    <scope>NUCLEOTIDE SEQUENCE [LARGE SCALE GENOMIC DNA]</scope>
    <source>
        <strain>YJ016</strain>
    </source>
</reference>